<name>ISY1_EREGS</name>
<accession>Q753F1</accession>
<feature type="chain" id="PRO_0000192963" description="Pre-mRNA-splicing factor ISY1">
    <location>
        <begin position="1"/>
        <end position="240"/>
    </location>
</feature>
<protein>
    <recommendedName>
        <fullName>Pre-mRNA-splicing factor ISY1</fullName>
    </recommendedName>
</protein>
<keyword id="KW-0963">Cytoplasm</keyword>
<keyword id="KW-0507">mRNA processing</keyword>
<keyword id="KW-0508">mRNA splicing</keyword>
<keyword id="KW-0539">Nucleus</keyword>
<keyword id="KW-1185">Reference proteome</keyword>
<keyword id="KW-0747">Spliceosome</keyword>
<comment type="function">
    <text evidence="1">Involved in nuclear pre-mRNA splicing.</text>
</comment>
<comment type="subunit">
    <text evidence="1">Associated with the spliceosome.</text>
</comment>
<comment type="subcellular location">
    <subcellularLocation>
        <location evidence="1">Cytoplasm</location>
    </subcellularLocation>
    <subcellularLocation>
        <location evidence="1">Nucleus</location>
    </subcellularLocation>
</comment>
<comment type="similarity">
    <text evidence="2">Belongs to the ISY1 family.</text>
</comment>
<reference key="1">
    <citation type="journal article" date="2004" name="Science">
        <title>The Ashbya gossypii genome as a tool for mapping the ancient Saccharomyces cerevisiae genome.</title>
        <authorList>
            <person name="Dietrich F.S."/>
            <person name="Voegeli S."/>
            <person name="Brachat S."/>
            <person name="Lerch A."/>
            <person name="Gates K."/>
            <person name="Steiner S."/>
            <person name="Mohr C."/>
            <person name="Poehlmann R."/>
            <person name="Luedi P."/>
            <person name="Choi S."/>
            <person name="Wing R.A."/>
            <person name="Flavier A."/>
            <person name="Gaffney T.D."/>
            <person name="Philippsen P."/>
        </authorList>
    </citation>
    <scope>NUCLEOTIDE SEQUENCE [LARGE SCALE GENOMIC DNA]</scope>
    <source>
        <strain>ATCC 10895 / CBS 109.51 / FGSC 9923 / NRRL Y-1056</strain>
    </source>
</reference>
<reference key="2">
    <citation type="journal article" date="2013" name="G3 (Bethesda)">
        <title>Genomes of Ashbya fungi isolated from insects reveal four mating-type loci, numerous translocations, lack of transposons, and distinct gene duplications.</title>
        <authorList>
            <person name="Dietrich F.S."/>
            <person name="Voegeli S."/>
            <person name="Kuo S."/>
            <person name="Philippsen P."/>
        </authorList>
    </citation>
    <scope>GENOME REANNOTATION</scope>
    <source>
        <strain>ATCC 10895 / CBS 109.51 / FGSC 9923 / NRRL Y-1056</strain>
    </source>
</reference>
<sequence length="240" mass="28562">MSRNVDKANSVLARYQELVAENTSGYKDYSRFKRPTAVHRISNLEEAQRWRAEVVKDIGNKVTQIHDPSLNEMQIEDINNELNRLFQEKMRWESHIRRNLRGPDYRRMKQGLNTTGGTVINGTRYFGRALELPHVQELLQQQQQQRVKQQNQKQREQELRAKVRQWEEELGPDYYGEDVPPGMQEYEAQRSRELQDILRSAAGRAPQVQIPLFERLPTQEEVEGWLVERRRKRLQERLDL</sequence>
<gene>
    <name type="primary">ISY1</name>
    <name type="ordered locus">AFR363W</name>
</gene>
<dbReference type="EMBL" id="AE016819">
    <property type="protein sequence ID" value="AAS53734.1"/>
    <property type="molecule type" value="Genomic_DNA"/>
</dbReference>
<dbReference type="RefSeq" id="NP_985910.1">
    <property type="nucleotide sequence ID" value="NM_211265.1"/>
</dbReference>
<dbReference type="SMR" id="Q753F1"/>
<dbReference type="FunCoup" id="Q753F1">
    <property type="interactions" value="258"/>
</dbReference>
<dbReference type="STRING" id="284811.Q753F1"/>
<dbReference type="EnsemblFungi" id="AAS53734">
    <property type="protein sequence ID" value="AAS53734"/>
    <property type="gene ID" value="AGOS_AFR363W"/>
</dbReference>
<dbReference type="GeneID" id="4622180"/>
<dbReference type="KEGG" id="ago:AGOS_AFR363W"/>
<dbReference type="eggNOG" id="KOG3068">
    <property type="taxonomic scope" value="Eukaryota"/>
</dbReference>
<dbReference type="HOGENOM" id="CLU_043453_2_1_1"/>
<dbReference type="InParanoid" id="Q753F1"/>
<dbReference type="OMA" id="YHWERRI"/>
<dbReference type="OrthoDB" id="1739576at2759"/>
<dbReference type="Proteomes" id="UP000000591">
    <property type="component" value="Chromosome VI"/>
</dbReference>
<dbReference type="GO" id="GO:0071013">
    <property type="term" value="C:catalytic step 2 spliceosome"/>
    <property type="evidence" value="ECO:0000318"/>
    <property type="project" value="GO_Central"/>
</dbReference>
<dbReference type="GO" id="GO:0005737">
    <property type="term" value="C:cytoplasm"/>
    <property type="evidence" value="ECO:0007669"/>
    <property type="project" value="UniProtKB-SubCell"/>
</dbReference>
<dbReference type="GO" id="GO:0071014">
    <property type="term" value="C:post-mRNA release spliceosomal complex"/>
    <property type="evidence" value="ECO:0000318"/>
    <property type="project" value="GO_Central"/>
</dbReference>
<dbReference type="GO" id="GO:0071020">
    <property type="term" value="C:post-spliceosomal complex"/>
    <property type="evidence" value="ECO:0000318"/>
    <property type="project" value="GO_Central"/>
</dbReference>
<dbReference type="GO" id="GO:0000974">
    <property type="term" value="C:Prp19 complex"/>
    <property type="evidence" value="ECO:0000318"/>
    <property type="project" value="GO_Central"/>
</dbReference>
<dbReference type="GO" id="GO:0071006">
    <property type="term" value="C:U2-type catalytic step 1 spliceosome"/>
    <property type="evidence" value="ECO:0007669"/>
    <property type="project" value="EnsemblFungi"/>
</dbReference>
<dbReference type="GO" id="GO:0071007">
    <property type="term" value="C:U2-type catalytic step 2 spliceosome"/>
    <property type="evidence" value="ECO:0007669"/>
    <property type="project" value="EnsemblFungi"/>
</dbReference>
<dbReference type="GO" id="GO:0000384">
    <property type="term" value="F:first spliceosomal transesterification activity"/>
    <property type="evidence" value="ECO:0007669"/>
    <property type="project" value="EnsemblFungi"/>
</dbReference>
<dbReference type="GO" id="GO:0000350">
    <property type="term" value="P:generation of catalytic spliceosome for second transesterification step"/>
    <property type="evidence" value="ECO:0000318"/>
    <property type="project" value="GO_Central"/>
</dbReference>
<dbReference type="GO" id="GO:0000389">
    <property type="term" value="P:mRNA 3'-splice site recognition"/>
    <property type="evidence" value="ECO:0000318"/>
    <property type="project" value="GO_Central"/>
</dbReference>
<dbReference type="FunFam" id="1.10.287.660:FF:000001">
    <property type="entry name" value="pre-mRNA-splicing factor ISY1 homolog"/>
    <property type="match status" value="1"/>
</dbReference>
<dbReference type="Gene3D" id="1.10.287.660">
    <property type="entry name" value="Helix hairpin bin"/>
    <property type="match status" value="1"/>
</dbReference>
<dbReference type="InterPro" id="IPR029012">
    <property type="entry name" value="Helix_hairpin_bin_sf"/>
</dbReference>
<dbReference type="InterPro" id="IPR009360">
    <property type="entry name" value="Isy1"/>
</dbReference>
<dbReference type="InterPro" id="IPR037200">
    <property type="entry name" value="Isy1_sf"/>
</dbReference>
<dbReference type="PANTHER" id="PTHR13021">
    <property type="entry name" value="PRE-MRNA-SPLICING FACTOR ISY1"/>
    <property type="match status" value="1"/>
</dbReference>
<dbReference type="Pfam" id="PF06246">
    <property type="entry name" value="Isy1"/>
    <property type="match status" value="1"/>
</dbReference>
<dbReference type="SUPFAM" id="SSF140102">
    <property type="entry name" value="ISY1 domain-like"/>
    <property type="match status" value="1"/>
</dbReference>
<proteinExistence type="inferred from homology"/>
<evidence type="ECO:0000250" key="1"/>
<evidence type="ECO:0000305" key="2"/>
<organism>
    <name type="scientific">Eremothecium gossypii (strain ATCC 10895 / CBS 109.51 / FGSC 9923 / NRRL Y-1056)</name>
    <name type="common">Yeast</name>
    <name type="synonym">Ashbya gossypii</name>
    <dbReference type="NCBI Taxonomy" id="284811"/>
    <lineage>
        <taxon>Eukaryota</taxon>
        <taxon>Fungi</taxon>
        <taxon>Dikarya</taxon>
        <taxon>Ascomycota</taxon>
        <taxon>Saccharomycotina</taxon>
        <taxon>Saccharomycetes</taxon>
        <taxon>Saccharomycetales</taxon>
        <taxon>Saccharomycetaceae</taxon>
        <taxon>Eremothecium</taxon>
    </lineage>
</organism>